<comment type="function">
    <text>Anti-gonadotropic neuropeptide. It also decreases the binding capacity of calfluxin to membrane-bound receptors of the albumen gland. This leads to inhibition of the reproductive activities of the infected snail.</text>
</comment>
<comment type="subcellular location">
    <subcellularLocation>
        <location>Secreted</location>
    </subcellularLocation>
</comment>
<comment type="tissue specificity">
    <text>Growth-controlling neurosecretory light green cells, in the cerebral ganglia of the CNS.</text>
</comment>
<comment type="induction">
    <text>Its release and/or synthesis is stimulated during parasitic infection.</text>
</comment>
<comment type="PTM">
    <text evidence="1">Contains four disulfide bonds.</text>
</comment>
<name>SCHS_LYMST</name>
<accession>P24471</accession>
<reference key="1">
    <citation type="journal article" date="1991" name="Biochem. J.">
        <title>Primary structure and origin of schistosomin, an anti-gonadotropic neuropeptide of the pond snail Lymnaea stagnalis.</title>
        <authorList>
            <person name="Hordijk P.L."/>
            <person name="Schallig H.D.F.H."/>
            <person name="Ebberink R.H.M."/>
            <person name="de Jong-Brink M."/>
            <person name="Joosse J."/>
        </authorList>
    </citation>
    <scope>PROTEIN SEQUENCE</scope>
    <source>
        <tissue>CNS</tissue>
    </source>
</reference>
<keyword id="KW-0903">Direct protein sequencing</keyword>
<keyword id="KW-1015">Disulfide bond</keyword>
<keyword id="KW-0964">Secreted</keyword>
<proteinExistence type="evidence at protein level"/>
<evidence type="ECO:0000305" key="1"/>
<sequence length="79" mass="8745">DNYWCPQSGEAFECFESDPNAKFCLNSGKTSVVICSKCRKKYEFCRNGLKVSKRPDYDCGAGWESTPCTGDNSAVPAVF</sequence>
<feature type="chain" id="PRO_0000097625" description="Schistosomin">
    <location>
        <begin position="1"/>
        <end position="79"/>
    </location>
</feature>
<organism>
    <name type="scientific">Lymnaea stagnalis</name>
    <name type="common">Great pond snail</name>
    <name type="synonym">Helix stagnalis</name>
    <dbReference type="NCBI Taxonomy" id="6523"/>
    <lineage>
        <taxon>Eukaryota</taxon>
        <taxon>Metazoa</taxon>
        <taxon>Spiralia</taxon>
        <taxon>Lophotrochozoa</taxon>
        <taxon>Mollusca</taxon>
        <taxon>Gastropoda</taxon>
        <taxon>Heterobranchia</taxon>
        <taxon>Euthyneura</taxon>
        <taxon>Panpulmonata</taxon>
        <taxon>Hygrophila</taxon>
        <taxon>Lymnaeoidea</taxon>
        <taxon>Lymnaeidae</taxon>
        <taxon>Lymnaea</taxon>
    </lineage>
</organism>
<protein>
    <recommendedName>
        <fullName>Schistosomin</fullName>
    </recommendedName>
</protein>
<dbReference type="PIR" id="S19274">
    <property type="entry name" value="S19274"/>
</dbReference>
<dbReference type="GO" id="GO:0005576">
    <property type="term" value="C:extracellular region"/>
    <property type="evidence" value="ECO:0007669"/>
    <property type="project" value="UniProtKB-SubCell"/>
</dbReference>